<gene>
    <name evidence="1" type="primary">adk</name>
    <name type="ordered locus">Bphy_0535</name>
</gene>
<reference key="1">
    <citation type="journal article" date="2014" name="Stand. Genomic Sci.">
        <title>Complete genome sequence of Burkholderia phymatum STM815(T), a broad host range and efficient nitrogen-fixing symbiont of Mimosa species.</title>
        <authorList>
            <person name="Moulin L."/>
            <person name="Klonowska A."/>
            <person name="Caroline B."/>
            <person name="Booth K."/>
            <person name="Vriezen J.A."/>
            <person name="Melkonian R."/>
            <person name="James E.K."/>
            <person name="Young J.P."/>
            <person name="Bena G."/>
            <person name="Hauser L."/>
            <person name="Land M."/>
            <person name="Kyrpides N."/>
            <person name="Bruce D."/>
            <person name="Chain P."/>
            <person name="Copeland A."/>
            <person name="Pitluck S."/>
            <person name="Woyke T."/>
            <person name="Lizotte-Waniewski M."/>
            <person name="Bristow J."/>
            <person name="Riley M."/>
        </authorList>
    </citation>
    <scope>NUCLEOTIDE SEQUENCE [LARGE SCALE GENOMIC DNA]</scope>
    <source>
        <strain>DSM 17167 / CIP 108236 / LMG 21445 / STM815</strain>
    </source>
</reference>
<accession>B2JDV1</accession>
<feature type="chain" id="PRO_1000100539" description="Adenylate kinase">
    <location>
        <begin position="1"/>
        <end position="221"/>
    </location>
</feature>
<feature type="region of interest" description="NMP" evidence="1">
    <location>
        <begin position="30"/>
        <end position="59"/>
    </location>
</feature>
<feature type="region of interest" description="LID" evidence="1">
    <location>
        <begin position="122"/>
        <end position="159"/>
    </location>
</feature>
<feature type="binding site" evidence="1">
    <location>
        <begin position="10"/>
        <end position="15"/>
    </location>
    <ligand>
        <name>ATP</name>
        <dbReference type="ChEBI" id="CHEBI:30616"/>
    </ligand>
</feature>
<feature type="binding site" evidence="1">
    <location>
        <position position="31"/>
    </location>
    <ligand>
        <name>AMP</name>
        <dbReference type="ChEBI" id="CHEBI:456215"/>
    </ligand>
</feature>
<feature type="binding site" evidence="1">
    <location>
        <position position="36"/>
    </location>
    <ligand>
        <name>AMP</name>
        <dbReference type="ChEBI" id="CHEBI:456215"/>
    </ligand>
</feature>
<feature type="binding site" evidence="1">
    <location>
        <begin position="57"/>
        <end position="59"/>
    </location>
    <ligand>
        <name>AMP</name>
        <dbReference type="ChEBI" id="CHEBI:456215"/>
    </ligand>
</feature>
<feature type="binding site" evidence="1">
    <location>
        <begin position="85"/>
        <end position="88"/>
    </location>
    <ligand>
        <name>AMP</name>
        <dbReference type="ChEBI" id="CHEBI:456215"/>
    </ligand>
</feature>
<feature type="binding site" evidence="1">
    <location>
        <position position="92"/>
    </location>
    <ligand>
        <name>AMP</name>
        <dbReference type="ChEBI" id="CHEBI:456215"/>
    </ligand>
</feature>
<feature type="binding site" evidence="1">
    <location>
        <position position="123"/>
    </location>
    <ligand>
        <name>ATP</name>
        <dbReference type="ChEBI" id="CHEBI:30616"/>
    </ligand>
</feature>
<feature type="binding site" evidence="1">
    <location>
        <begin position="132"/>
        <end position="133"/>
    </location>
    <ligand>
        <name>ATP</name>
        <dbReference type="ChEBI" id="CHEBI:30616"/>
    </ligand>
</feature>
<feature type="binding site" evidence="1">
    <location>
        <position position="156"/>
    </location>
    <ligand>
        <name>AMP</name>
        <dbReference type="ChEBI" id="CHEBI:456215"/>
    </ligand>
</feature>
<feature type="binding site" evidence="1">
    <location>
        <position position="167"/>
    </location>
    <ligand>
        <name>AMP</name>
        <dbReference type="ChEBI" id="CHEBI:456215"/>
    </ligand>
</feature>
<feature type="binding site" evidence="1">
    <location>
        <position position="207"/>
    </location>
    <ligand>
        <name>ATP</name>
        <dbReference type="ChEBI" id="CHEBI:30616"/>
    </ligand>
</feature>
<dbReference type="EC" id="2.7.4.3" evidence="1"/>
<dbReference type="EMBL" id="CP001043">
    <property type="protein sequence ID" value="ACC69727.1"/>
    <property type="molecule type" value="Genomic_DNA"/>
</dbReference>
<dbReference type="RefSeq" id="WP_012399952.1">
    <property type="nucleotide sequence ID" value="NC_010622.1"/>
</dbReference>
<dbReference type="SMR" id="B2JDV1"/>
<dbReference type="STRING" id="391038.Bphy_0535"/>
<dbReference type="KEGG" id="bph:Bphy_0535"/>
<dbReference type="eggNOG" id="COG0563">
    <property type="taxonomic scope" value="Bacteria"/>
</dbReference>
<dbReference type="HOGENOM" id="CLU_032354_1_2_4"/>
<dbReference type="OrthoDB" id="9805030at2"/>
<dbReference type="UniPathway" id="UPA00588">
    <property type="reaction ID" value="UER00649"/>
</dbReference>
<dbReference type="Proteomes" id="UP000001192">
    <property type="component" value="Chromosome 1"/>
</dbReference>
<dbReference type="GO" id="GO:0005737">
    <property type="term" value="C:cytoplasm"/>
    <property type="evidence" value="ECO:0007669"/>
    <property type="project" value="UniProtKB-SubCell"/>
</dbReference>
<dbReference type="GO" id="GO:0004017">
    <property type="term" value="F:adenylate kinase activity"/>
    <property type="evidence" value="ECO:0007669"/>
    <property type="project" value="UniProtKB-UniRule"/>
</dbReference>
<dbReference type="GO" id="GO:0005524">
    <property type="term" value="F:ATP binding"/>
    <property type="evidence" value="ECO:0007669"/>
    <property type="project" value="UniProtKB-UniRule"/>
</dbReference>
<dbReference type="GO" id="GO:0044209">
    <property type="term" value="P:AMP salvage"/>
    <property type="evidence" value="ECO:0007669"/>
    <property type="project" value="UniProtKB-UniRule"/>
</dbReference>
<dbReference type="CDD" id="cd01428">
    <property type="entry name" value="ADK"/>
    <property type="match status" value="1"/>
</dbReference>
<dbReference type="FunFam" id="3.40.50.300:FF:000106">
    <property type="entry name" value="Adenylate kinase mitochondrial"/>
    <property type="match status" value="1"/>
</dbReference>
<dbReference type="Gene3D" id="3.40.50.300">
    <property type="entry name" value="P-loop containing nucleotide triphosphate hydrolases"/>
    <property type="match status" value="1"/>
</dbReference>
<dbReference type="HAMAP" id="MF_00235">
    <property type="entry name" value="Adenylate_kinase_Adk"/>
    <property type="match status" value="1"/>
</dbReference>
<dbReference type="InterPro" id="IPR006259">
    <property type="entry name" value="Adenyl_kin_sub"/>
</dbReference>
<dbReference type="InterPro" id="IPR000850">
    <property type="entry name" value="Adenylat/UMP-CMP_kin"/>
</dbReference>
<dbReference type="InterPro" id="IPR033690">
    <property type="entry name" value="Adenylat_kinase_CS"/>
</dbReference>
<dbReference type="InterPro" id="IPR007862">
    <property type="entry name" value="Adenylate_kinase_lid-dom"/>
</dbReference>
<dbReference type="InterPro" id="IPR027417">
    <property type="entry name" value="P-loop_NTPase"/>
</dbReference>
<dbReference type="NCBIfam" id="TIGR01351">
    <property type="entry name" value="adk"/>
    <property type="match status" value="1"/>
</dbReference>
<dbReference type="NCBIfam" id="NF001379">
    <property type="entry name" value="PRK00279.1-1"/>
    <property type="match status" value="1"/>
</dbReference>
<dbReference type="NCBIfam" id="NF001380">
    <property type="entry name" value="PRK00279.1-2"/>
    <property type="match status" value="1"/>
</dbReference>
<dbReference type="NCBIfam" id="NF001381">
    <property type="entry name" value="PRK00279.1-3"/>
    <property type="match status" value="1"/>
</dbReference>
<dbReference type="NCBIfam" id="NF011100">
    <property type="entry name" value="PRK14527.1"/>
    <property type="match status" value="1"/>
</dbReference>
<dbReference type="PANTHER" id="PTHR23359">
    <property type="entry name" value="NUCLEOTIDE KINASE"/>
    <property type="match status" value="1"/>
</dbReference>
<dbReference type="Pfam" id="PF00406">
    <property type="entry name" value="ADK"/>
    <property type="match status" value="1"/>
</dbReference>
<dbReference type="Pfam" id="PF05191">
    <property type="entry name" value="ADK_lid"/>
    <property type="match status" value="1"/>
</dbReference>
<dbReference type="PRINTS" id="PR00094">
    <property type="entry name" value="ADENYLTKNASE"/>
</dbReference>
<dbReference type="SUPFAM" id="SSF52540">
    <property type="entry name" value="P-loop containing nucleoside triphosphate hydrolases"/>
    <property type="match status" value="1"/>
</dbReference>
<dbReference type="PROSITE" id="PS00113">
    <property type="entry name" value="ADENYLATE_KINASE"/>
    <property type="match status" value="1"/>
</dbReference>
<evidence type="ECO:0000255" key="1">
    <source>
        <dbReference type="HAMAP-Rule" id="MF_00235"/>
    </source>
</evidence>
<keyword id="KW-0067">ATP-binding</keyword>
<keyword id="KW-0963">Cytoplasm</keyword>
<keyword id="KW-0418">Kinase</keyword>
<keyword id="KW-0545">Nucleotide biosynthesis</keyword>
<keyword id="KW-0547">Nucleotide-binding</keyword>
<keyword id="KW-1185">Reference proteome</keyword>
<keyword id="KW-0808">Transferase</keyword>
<organism>
    <name type="scientific">Paraburkholderia phymatum (strain DSM 17167 / CIP 108236 / LMG 21445 / STM815)</name>
    <name type="common">Burkholderia phymatum</name>
    <dbReference type="NCBI Taxonomy" id="391038"/>
    <lineage>
        <taxon>Bacteria</taxon>
        <taxon>Pseudomonadati</taxon>
        <taxon>Pseudomonadota</taxon>
        <taxon>Betaproteobacteria</taxon>
        <taxon>Burkholderiales</taxon>
        <taxon>Burkholderiaceae</taxon>
        <taxon>Paraburkholderia</taxon>
    </lineage>
</organism>
<name>KAD_PARP8</name>
<sequence>MRLILLGAPGAGKGTQANFIKEKFGIPQISTGDMLRAAVKAGTPLGLEAKRYMDAGELVTDELIINLVKERLQDSDCANGYLFDGFPRTIPQAEAMKQAGVAIDYVLEIDVPFDEIITRMSGRRMHPASGRTYHVKFNPPKVEGVDDVTGEPLIQRDDDKEETVKKRLDVYVSQTKPLIDYYNNWAQKGDPSTSLAAPQYRRISGLGSVDEIRARVFDALK</sequence>
<protein>
    <recommendedName>
        <fullName evidence="1">Adenylate kinase</fullName>
        <shortName evidence="1">AK</shortName>
        <ecNumber evidence="1">2.7.4.3</ecNumber>
    </recommendedName>
    <alternativeName>
        <fullName evidence="1">ATP-AMP transphosphorylase</fullName>
    </alternativeName>
    <alternativeName>
        <fullName evidence="1">ATP:AMP phosphotransferase</fullName>
    </alternativeName>
    <alternativeName>
        <fullName evidence="1">Adenylate monophosphate kinase</fullName>
    </alternativeName>
</protein>
<proteinExistence type="inferred from homology"/>
<comment type="function">
    <text evidence="1">Catalyzes the reversible transfer of the terminal phosphate group between ATP and AMP. Plays an important role in cellular energy homeostasis and in adenine nucleotide metabolism.</text>
</comment>
<comment type="catalytic activity">
    <reaction evidence="1">
        <text>AMP + ATP = 2 ADP</text>
        <dbReference type="Rhea" id="RHEA:12973"/>
        <dbReference type="ChEBI" id="CHEBI:30616"/>
        <dbReference type="ChEBI" id="CHEBI:456215"/>
        <dbReference type="ChEBI" id="CHEBI:456216"/>
        <dbReference type="EC" id="2.7.4.3"/>
    </reaction>
</comment>
<comment type="pathway">
    <text evidence="1">Purine metabolism; AMP biosynthesis via salvage pathway; AMP from ADP: step 1/1.</text>
</comment>
<comment type="subunit">
    <text evidence="1">Monomer.</text>
</comment>
<comment type="subcellular location">
    <subcellularLocation>
        <location evidence="1">Cytoplasm</location>
    </subcellularLocation>
</comment>
<comment type="domain">
    <text evidence="1">Consists of three domains, a large central CORE domain and two small peripheral domains, NMPbind and LID, which undergo movements during catalysis. The LID domain closes over the site of phosphoryl transfer upon ATP binding. Assembling and dissambling the active center during each catalytic cycle provides an effective means to prevent ATP hydrolysis.</text>
</comment>
<comment type="similarity">
    <text evidence="1">Belongs to the adenylate kinase family.</text>
</comment>